<organism>
    <name type="scientific">Hyperthermus butylicus (strain DSM 5456 / JCM 9403 / PLM1-5)</name>
    <dbReference type="NCBI Taxonomy" id="415426"/>
    <lineage>
        <taxon>Archaea</taxon>
        <taxon>Thermoproteota</taxon>
        <taxon>Thermoprotei</taxon>
        <taxon>Desulfurococcales</taxon>
        <taxon>Pyrodictiaceae</taxon>
        <taxon>Hyperthermus</taxon>
    </lineage>
</organism>
<keyword id="KW-0255">Endonuclease</keyword>
<keyword id="KW-0378">Hydrolase</keyword>
<keyword id="KW-0540">Nuclease</keyword>
<keyword id="KW-1185">Reference proteome</keyword>
<keyword id="KW-0819">tRNA processing</keyword>
<comment type="function">
    <text evidence="1">RNA-free RNase P that catalyzes the removal of the 5'-leader sequence from pre-tRNA to produce the mature 5'-terminus.</text>
</comment>
<comment type="catalytic activity">
    <reaction evidence="1">
        <text>Endonucleolytic cleavage of RNA, removing 5'-extranucleotides from tRNA precursor.</text>
        <dbReference type="EC" id="3.1.26.5"/>
    </reaction>
</comment>
<comment type="similarity">
    <text evidence="1">Belongs to the HARP family.</text>
</comment>
<proteinExistence type="inferred from homology"/>
<protein>
    <recommendedName>
        <fullName evidence="1">RNA-free ribonuclease P</fullName>
        <shortName evidence="1">RNA-free RNase P</shortName>
        <ecNumber evidence="1">3.1.26.5</ecNumber>
    </recommendedName>
    <alternativeName>
        <fullName evidence="1">Protein-only RNase P</fullName>
    </alternativeName>
</protein>
<feature type="chain" id="PRO_0000366692" description="RNA-free ribonuclease P">
    <location>
        <begin position="1"/>
        <end position="238"/>
    </location>
</feature>
<name>RFRNP_HYPBU</name>
<gene>
    <name type="ordered locus">Hbut_1548</name>
</gene>
<reference key="1">
    <citation type="journal article" date="2007" name="Archaea">
        <title>The genome of Hyperthermus butylicus: a sulfur-reducing, peptide fermenting, neutrophilic Crenarchaeote growing up to 108 degrees C.</title>
        <authorList>
            <person name="Bruegger K."/>
            <person name="Chen L."/>
            <person name="Stark M."/>
            <person name="Zibat A."/>
            <person name="Redder P."/>
            <person name="Ruepp A."/>
            <person name="Awayez M."/>
            <person name="She Q."/>
            <person name="Garrett R.A."/>
            <person name="Klenk H.-P."/>
        </authorList>
    </citation>
    <scope>NUCLEOTIDE SEQUENCE [LARGE SCALE GENOMIC DNA]</scope>
    <source>
        <strain>DSM 5456 / JCM 9403 / PLM1-5</strain>
    </source>
</reference>
<accession>A2BN08</accession>
<evidence type="ECO:0000255" key="1">
    <source>
        <dbReference type="HAMAP-Rule" id="MF_01078"/>
    </source>
</evidence>
<sequence>MAEARLQRLLRVYVLDTSALTDTRLRSLLGSGSLDEAVRRFAELIASVRIAYGVEVYMPPTVYEEARRFLLSNGVTVQSFEALAAWITIKPPTRHEIRIPASIVRDYVEEVRARLARGLRVAEEHVRRAFEAGGLYAAETASREARREKLGAIIRGLRERYREATRHGMLDSVEDLDAVLLALEVRGVLVSNDEGVRRFAEALGVISIDPPKFISVLQGLLRHSKTGGVAREEAHSTS</sequence>
<dbReference type="EC" id="3.1.26.5" evidence="1"/>
<dbReference type="EMBL" id="CP000493">
    <property type="protein sequence ID" value="ABM81369.1"/>
    <property type="molecule type" value="Genomic_DNA"/>
</dbReference>
<dbReference type="RefSeq" id="WP_011822687.1">
    <property type="nucleotide sequence ID" value="NC_008818.1"/>
</dbReference>
<dbReference type="SMR" id="A2BN08"/>
<dbReference type="STRING" id="415426.Hbut_1548"/>
<dbReference type="EnsemblBacteria" id="ABM81369">
    <property type="protein sequence ID" value="ABM81369"/>
    <property type="gene ID" value="Hbut_1548"/>
</dbReference>
<dbReference type="GeneID" id="4782156"/>
<dbReference type="KEGG" id="hbu:Hbut_1548"/>
<dbReference type="eggNOG" id="arCOG00720">
    <property type="taxonomic scope" value="Archaea"/>
</dbReference>
<dbReference type="HOGENOM" id="CLU_109672_0_0_2"/>
<dbReference type="OrthoDB" id="95197at2157"/>
<dbReference type="Proteomes" id="UP000002593">
    <property type="component" value="Chromosome"/>
</dbReference>
<dbReference type="GO" id="GO:0004526">
    <property type="term" value="F:ribonuclease P activity"/>
    <property type="evidence" value="ECO:0007669"/>
    <property type="project" value="UniProtKB-UniRule"/>
</dbReference>
<dbReference type="GO" id="GO:0001682">
    <property type="term" value="P:tRNA 5'-leader removal"/>
    <property type="evidence" value="ECO:0007669"/>
    <property type="project" value="UniProtKB-UniRule"/>
</dbReference>
<dbReference type="CDD" id="cd18691">
    <property type="entry name" value="PIN_VapC-like"/>
    <property type="match status" value="1"/>
</dbReference>
<dbReference type="HAMAP" id="MF_01078">
    <property type="entry name" value="RNA_free_RNase_P"/>
    <property type="match status" value="1"/>
</dbReference>
<dbReference type="InterPro" id="IPR014856">
    <property type="entry name" value="RNA_free_RNase_P"/>
</dbReference>
<dbReference type="NCBIfam" id="NF003345">
    <property type="entry name" value="PRK04358.1-6"/>
    <property type="match status" value="1"/>
</dbReference>
<dbReference type="NCBIfam" id="TIGR03875">
    <property type="entry name" value="RNA_lig_partner"/>
    <property type="match status" value="1"/>
</dbReference>
<dbReference type="PANTHER" id="PTHR41173:SF1">
    <property type="entry name" value="RNA-FREE RIBONUCLEASE P"/>
    <property type="match status" value="1"/>
</dbReference>
<dbReference type="PANTHER" id="PTHR41173">
    <property type="entry name" value="UPF0278 PROTEIN TK1425"/>
    <property type="match status" value="1"/>
</dbReference>
<dbReference type="Pfam" id="PF08745">
    <property type="entry name" value="PIN_5"/>
    <property type="match status" value="1"/>
</dbReference>